<reference key="1">
    <citation type="journal article" date="2005" name="J. Bacteriol.">
        <title>Insights into genome plasticity and pathogenicity of the plant pathogenic Bacterium Xanthomonas campestris pv. vesicatoria revealed by the complete genome sequence.</title>
        <authorList>
            <person name="Thieme F."/>
            <person name="Koebnik R."/>
            <person name="Bekel T."/>
            <person name="Berger C."/>
            <person name="Boch J."/>
            <person name="Buettner D."/>
            <person name="Caldana C."/>
            <person name="Gaigalat L."/>
            <person name="Goesmann A."/>
            <person name="Kay S."/>
            <person name="Kirchner O."/>
            <person name="Lanz C."/>
            <person name="Linke B."/>
            <person name="McHardy A.C."/>
            <person name="Meyer F."/>
            <person name="Mittenhuber G."/>
            <person name="Nies D.H."/>
            <person name="Niesbach-Kloesgen U."/>
            <person name="Patschkowski T."/>
            <person name="Rueckert C."/>
            <person name="Rupp O."/>
            <person name="Schneiker S."/>
            <person name="Schuster S.C."/>
            <person name="Vorhoelter F.J."/>
            <person name="Weber E."/>
            <person name="Puehler A."/>
            <person name="Bonas U."/>
            <person name="Bartels D."/>
            <person name="Kaiser O."/>
        </authorList>
    </citation>
    <scope>NUCLEOTIDE SEQUENCE [LARGE SCALE GENOMIC DNA]</scope>
    <source>
        <strain>85-10</strain>
    </source>
</reference>
<name>FABH_XANE5</name>
<organism>
    <name type="scientific">Xanthomonas euvesicatoria pv. vesicatoria (strain 85-10)</name>
    <name type="common">Xanthomonas campestris pv. vesicatoria</name>
    <dbReference type="NCBI Taxonomy" id="316273"/>
    <lineage>
        <taxon>Bacteria</taxon>
        <taxon>Pseudomonadati</taxon>
        <taxon>Pseudomonadota</taxon>
        <taxon>Gammaproteobacteria</taxon>
        <taxon>Lysobacterales</taxon>
        <taxon>Lysobacteraceae</taxon>
        <taxon>Xanthomonas</taxon>
    </lineage>
</organism>
<proteinExistence type="inferred from homology"/>
<accession>Q3BWI9</accession>
<sequence length="325" mass="34799">MSKRIYSRIAGTGSYLPEKVLTNDDMSKIVDTSDEWIFSRTGIRERHIVADDQTTSDLAYFASLKAMEAAGVTAEEIDLIVIGTTTPDLIFPSTACLLQARLGNVGCGAMDVNAACSGFVYALSVADKFVRSGDAKTVLVVGAETLTRIVDWTDRTTCVLFGDGAGAVILKADEETGILSTHLHADGSKKELLWDPVGVSVGFGEGKNGGGALLMKGNDVFKYAVKALDSVVDETLAANGYDKHDLDWLIPHQANLRIIEATAKRLELPMEQVVVTVDRHGNTSSASVPLALDEAVRSGRVQRGQLLLLEAFGGGFTWGSALLRY</sequence>
<gene>
    <name evidence="1" type="primary">fabH</name>
    <name type="ordered locus">XCV1143</name>
</gene>
<dbReference type="EC" id="2.3.1.180" evidence="1"/>
<dbReference type="EMBL" id="AM039952">
    <property type="protein sequence ID" value="CAJ22774.1"/>
    <property type="molecule type" value="Genomic_DNA"/>
</dbReference>
<dbReference type="RefSeq" id="WP_011346633.1">
    <property type="nucleotide sequence ID" value="NZ_CP017190.1"/>
</dbReference>
<dbReference type="SMR" id="Q3BWI9"/>
<dbReference type="STRING" id="456327.BJD11_16940"/>
<dbReference type="KEGG" id="xcv:XCV1143"/>
<dbReference type="eggNOG" id="COG0332">
    <property type="taxonomic scope" value="Bacteria"/>
</dbReference>
<dbReference type="HOGENOM" id="CLU_039592_3_1_6"/>
<dbReference type="UniPathway" id="UPA00094"/>
<dbReference type="Proteomes" id="UP000007069">
    <property type="component" value="Chromosome"/>
</dbReference>
<dbReference type="GO" id="GO:0005737">
    <property type="term" value="C:cytoplasm"/>
    <property type="evidence" value="ECO:0007669"/>
    <property type="project" value="UniProtKB-SubCell"/>
</dbReference>
<dbReference type="GO" id="GO:0004315">
    <property type="term" value="F:3-oxoacyl-[acyl-carrier-protein] synthase activity"/>
    <property type="evidence" value="ECO:0007669"/>
    <property type="project" value="InterPro"/>
</dbReference>
<dbReference type="GO" id="GO:0033818">
    <property type="term" value="F:beta-ketoacyl-acyl-carrier-protein synthase III activity"/>
    <property type="evidence" value="ECO:0007669"/>
    <property type="project" value="UniProtKB-UniRule"/>
</dbReference>
<dbReference type="GO" id="GO:0006633">
    <property type="term" value="P:fatty acid biosynthetic process"/>
    <property type="evidence" value="ECO:0007669"/>
    <property type="project" value="UniProtKB-UniRule"/>
</dbReference>
<dbReference type="CDD" id="cd00830">
    <property type="entry name" value="KAS_III"/>
    <property type="match status" value="1"/>
</dbReference>
<dbReference type="FunFam" id="3.40.47.10:FF:000004">
    <property type="entry name" value="3-oxoacyl-[acyl-carrier-protein] synthase 3"/>
    <property type="match status" value="1"/>
</dbReference>
<dbReference type="Gene3D" id="3.40.47.10">
    <property type="match status" value="1"/>
</dbReference>
<dbReference type="HAMAP" id="MF_01815">
    <property type="entry name" value="FabH"/>
    <property type="match status" value="1"/>
</dbReference>
<dbReference type="InterPro" id="IPR013747">
    <property type="entry name" value="ACP_syn_III_C"/>
</dbReference>
<dbReference type="InterPro" id="IPR013751">
    <property type="entry name" value="ACP_syn_III_N"/>
</dbReference>
<dbReference type="InterPro" id="IPR004655">
    <property type="entry name" value="FabH"/>
</dbReference>
<dbReference type="InterPro" id="IPR016039">
    <property type="entry name" value="Thiolase-like"/>
</dbReference>
<dbReference type="NCBIfam" id="TIGR00747">
    <property type="entry name" value="fabH"/>
    <property type="match status" value="1"/>
</dbReference>
<dbReference type="NCBIfam" id="NF006829">
    <property type="entry name" value="PRK09352.1"/>
    <property type="match status" value="1"/>
</dbReference>
<dbReference type="PANTHER" id="PTHR43091">
    <property type="entry name" value="3-OXOACYL-[ACYL-CARRIER-PROTEIN] SYNTHASE"/>
    <property type="match status" value="1"/>
</dbReference>
<dbReference type="PANTHER" id="PTHR43091:SF1">
    <property type="entry name" value="BETA-KETOACYL-[ACYL-CARRIER-PROTEIN] SYNTHASE III, CHLOROPLASTIC"/>
    <property type="match status" value="1"/>
</dbReference>
<dbReference type="Pfam" id="PF08545">
    <property type="entry name" value="ACP_syn_III"/>
    <property type="match status" value="1"/>
</dbReference>
<dbReference type="Pfam" id="PF08541">
    <property type="entry name" value="ACP_syn_III_C"/>
    <property type="match status" value="1"/>
</dbReference>
<dbReference type="SUPFAM" id="SSF53901">
    <property type="entry name" value="Thiolase-like"/>
    <property type="match status" value="1"/>
</dbReference>
<feature type="chain" id="PRO_1000056443" description="Beta-ketoacyl-[acyl-carrier-protein] synthase III">
    <location>
        <begin position="1"/>
        <end position="325"/>
    </location>
</feature>
<feature type="region of interest" description="ACP-binding" evidence="1">
    <location>
        <begin position="253"/>
        <end position="257"/>
    </location>
</feature>
<feature type="active site" evidence="1">
    <location>
        <position position="116"/>
    </location>
</feature>
<feature type="active site" evidence="1">
    <location>
        <position position="252"/>
    </location>
</feature>
<feature type="active site" evidence="1">
    <location>
        <position position="282"/>
    </location>
</feature>
<protein>
    <recommendedName>
        <fullName evidence="1">Beta-ketoacyl-[acyl-carrier-protein] synthase III</fullName>
        <shortName evidence="1">Beta-ketoacyl-ACP synthase III</shortName>
        <shortName evidence="1">KAS III</shortName>
        <ecNumber evidence="1">2.3.1.180</ecNumber>
    </recommendedName>
    <alternativeName>
        <fullName evidence="1">3-oxoacyl-[acyl-carrier-protein] synthase 3</fullName>
    </alternativeName>
    <alternativeName>
        <fullName evidence="1">3-oxoacyl-[acyl-carrier-protein] synthase III</fullName>
    </alternativeName>
</protein>
<keyword id="KW-0012">Acyltransferase</keyword>
<keyword id="KW-0963">Cytoplasm</keyword>
<keyword id="KW-0275">Fatty acid biosynthesis</keyword>
<keyword id="KW-0276">Fatty acid metabolism</keyword>
<keyword id="KW-0444">Lipid biosynthesis</keyword>
<keyword id="KW-0443">Lipid metabolism</keyword>
<keyword id="KW-0511">Multifunctional enzyme</keyword>
<keyword id="KW-0808">Transferase</keyword>
<comment type="function">
    <text evidence="1">Catalyzes the condensation reaction of fatty acid synthesis by the addition to an acyl acceptor of two carbons from malonyl-ACP. Catalyzes the first condensation reaction which initiates fatty acid synthesis and may therefore play a role in governing the total rate of fatty acid production. Possesses both acetoacetyl-ACP synthase and acetyl transacylase activities. Its substrate specificity determines the biosynthesis of branched-chain and/or straight-chain of fatty acids.</text>
</comment>
<comment type="catalytic activity">
    <reaction evidence="1">
        <text>malonyl-[ACP] + acetyl-CoA + H(+) = 3-oxobutanoyl-[ACP] + CO2 + CoA</text>
        <dbReference type="Rhea" id="RHEA:12080"/>
        <dbReference type="Rhea" id="RHEA-COMP:9623"/>
        <dbReference type="Rhea" id="RHEA-COMP:9625"/>
        <dbReference type="ChEBI" id="CHEBI:15378"/>
        <dbReference type="ChEBI" id="CHEBI:16526"/>
        <dbReference type="ChEBI" id="CHEBI:57287"/>
        <dbReference type="ChEBI" id="CHEBI:57288"/>
        <dbReference type="ChEBI" id="CHEBI:78449"/>
        <dbReference type="ChEBI" id="CHEBI:78450"/>
        <dbReference type="EC" id="2.3.1.180"/>
    </reaction>
</comment>
<comment type="pathway">
    <text evidence="1">Lipid metabolism; fatty acid biosynthesis.</text>
</comment>
<comment type="subunit">
    <text evidence="1">Homodimer.</text>
</comment>
<comment type="subcellular location">
    <subcellularLocation>
        <location evidence="1">Cytoplasm</location>
    </subcellularLocation>
</comment>
<comment type="domain">
    <text evidence="1">The last Arg residue of the ACP-binding site is essential for the weak association between ACP/AcpP and FabH.</text>
</comment>
<comment type="similarity">
    <text evidence="1">Belongs to the thiolase-like superfamily. FabH family.</text>
</comment>
<evidence type="ECO:0000255" key="1">
    <source>
        <dbReference type="HAMAP-Rule" id="MF_01815"/>
    </source>
</evidence>